<sequence length="560" mass="64020">MSASLDTGDFQEFLKHGLTAIASAPGSETRHSPKREEQLREKRAGLPDRHRRPIPARSRLVMLPKVETEAPGLVRSHGEQGQMPENMQVSQFKMVNYSYDEDLEELCPVCGDKVSGYHYGLLTCESCKGFFKRTVQNQKRYTCIENQNCQIDKTQRKRCPYCRFKKCIDVGMKLEAVRADRMRGGRNKFGPMYKRDRALKQQKKALIRANGLKLEAMSQVIQAMPSDLTSAIQNIHSASKGLPLSHVALPPTDYDRSPFVTSPISMTMPPHSSLHGYQPYGHFPSRAIKSEYPDPYSSSPESMMGYSYMDGYQTNSPASIPHLILELLKCEPDEPQVQAKIMAYLQQEQSNRNRQEKLSAFGLLCKMADQTLFSIVEWARSSIFFRELKVDDQMKLLQNCWSELLILDHIYRQVAHGKEGTIFLVTGEHVDYSTIISHTEVAFNNLLSLAQELVVRLRSLQFDQREFVCLKFLVLFSSDVKNLENLQLVEGVQEQVNAALLDYTVCNYPQQTEKFGQLLLRLPEIRAISKQAEDYLYYKHVNGDVPYNNLLIEMLHAKRA</sequence>
<organism>
    <name type="scientific">Mus musculus</name>
    <name type="common">Mouse</name>
    <dbReference type="NCBI Taxonomy" id="10090"/>
    <lineage>
        <taxon>Eukaryota</taxon>
        <taxon>Metazoa</taxon>
        <taxon>Chordata</taxon>
        <taxon>Craniata</taxon>
        <taxon>Vertebrata</taxon>
        <taxon>Euteleostomi</taxon>
        <taxon>Mammalia</taxon>
        <taxon>Eutheria</taxon>
        <taxon>Euarchontoglires</taxon>
        <taxon>Glires</taxon>
        <taxon>Rodentia</taxon>
        <taxon>Myomorpha</taxon>
        <taxon>Muroidea</taxon>
        <taxon>Muridae</taxon>
        <taxon>Murinae</taxon>
        <taxon>Mus</taxon>
        <taxon>Mus</taxon>
    </lineage>
</organism>
<protein>
    <recommendedName>
        <fullName evidence="39">Nuclear receptor subfamily 5 group A member 2</fullName>
    </recommendedName>
    <alternativeName>
        <fullName evidence="35 36">Fetoprotein transcription factor</fullName>
        <shortName evidence="36">mFTF</shortName>
    </alternativeName>
    <alternativeName>
        <fullName evidence="34 37">Liver receptor homolog 1</fullName>
        <shortName evidence="34 37">LRH-1</shortName>
    </alternativeName>
</protein>
<dbReference type="EMBL" id="M81385">
    <property type="protein sequence ID" value="AAA39447.1"/>
    <property type="molecule type" value="mRNA"/>
</dbReference>
<dbReference type="EMBL" id="BC137845">
    <property type="protein sequence ID" value="AAI37846.1"/>
    <property type="molecule type" value="mRNA"/>
</dbReference>
<dbReference type="CCDS" id="CCDS15328.1"/>
<dbReference type="PIR" id="S27874">
    <property type="entry name" value="S27874"/>
</dbReference>
<dbReference type="RefSeq" id="NP_109601.1">
    <property type="nucleotide sequence ID" value="NM_030676.3"/>
</dbReference>
<dbReference type="PDB" id="1PK5">
    <property type="method" value="X-ray"/>
    <property type="resolution" value="2.40 A"/>
    <property type="chains" value="A/B=313-560"/>
</dbReference>
<dbReference type="PDB" id="1ZH7">
    <property type="method" value="X-ray"/>
    <property type="resolution" value="2.50 A"/>
    <property type="chains" value="A/B=318-560"/>
</dbReference>
<dbReference type="PDB" id="3F5C">
    <property type="method" value="X-ray"/>
    <property type="resolution" value="3.00 A"/>
    <property type="chains" value="A=313-560"/>
</dbReference>
<dbReference type="PDBsum" id="1PK5"/>
<dbReference type="PDBsum" id="1ZH7"/>
<dbReference type="PDBsum" id="3F5C"/>
<dbReference type="SMR" id="P45448"/>
<dbReference type="BioGRID" id="204976">
    <property type="interactions" value="4"/>
</dbReference>
<dbReference type="CORUM" id="P45448"/>
<dbReference type="FunCoup" id="P45448">
    <property type="interactions" value="2142"/>
</dbReference>
<dbReference type="STRING" id="10090.ENSMUSP00000027649"/>
<dbReference type="iPTMnet" id="P45448"/>
<dbReference type="PhosphoSitePlus" id="P45448"/>
<dbReference type="PaxDb" id="10090-ENSMUSP00000027649"/>
<dbReference type="ProteomicsDB" id="293888"/>
<dbReference type="Antibodypedia" id="1690">
    <property type="antibodies" value="490 antibodies from 39 providers"/>
</dbReference>
<dbReference type="DNASU" id="26424"/>
<dbReference type="Ensembl" id="ENSMUST00000027649.14">
    <property type="protein sequence ID" value="ENSMUSP00000027649.8"/>
    <property type="gene ID" value="ENSMUSG00000026398.15"/>
</dbReference>
<dbReference type="GeneID" id="26424"/>
<dbReference type="KEGG" id="mmu:26424"/>
<dbReference type="UCSC" id="uc007cva.2">
    <property type="organism name" value="mouse"/>
</dbReference>
<dbReference type="AGR" id="MGI:1346834"/>
<dbReference type="CTD" id="2494"/>
<dbReference type="MGI" id="MGI:1346834">
    <property type="gene designation" value="Nr5a2"/>
</dbReference>
<dbReference type="VEuPathDB" id="HostDB:ENSMUSG00000026398"/>
<dbReference type="eggNOG" id="KOG4218">
    <property type="taxonomic scope" value="Eukaryota"/>
</dbReference>
<dbReference type="GeneTree" id="ENSGT00940000153391"/>
<dbReference type="InParanoid" id="P45448"/>
<dbReference type="OrthoDB" id="5984981at2759"/>
<dbReference type="PhylomeDB" id="P45448"/>
<dbReference type="TreeFam" id="TF350737"/>
<dbReference type="Reactome" id="R-MMU-383280">
    <property type="pathway name" value="Nuclear Receptor transcription pathway"/>
</dbReference>
<dbReference type="Reactome" id="R-MMU-4090294">
    <property type="pathway name" value="SUMOylation of intracellular receptors"/>
</dbReference>
<dbReference type="BioGRID-ORCS" id="26424">
    <property type="hits" value="6 hits in 80 CRISPR screens"/>
</dbReference>
<dbReference type="ChiTaRS" id="Nr5a2">
    <property type="organism name" value="mouse"/>
</dbReference>
<dbReference type="EvolutionaryTrace" id="P45448"/>
<dbReference type="PRO" id="PR:P45448"/>
<dbReference type="Proteomes" id="UP000000589">
    <property type="component" value="Chromosome 1"/>
</dbReference>
<dbReference type="RNAct" id="P45448">
    <property type="molecule type" value="protein"/>
</dbReference>
<dbReference type="Bgee" id="ENSMUSG00000026398">
    <property type="expression patterns" value="Expressed in cumulus cell and 147 other cell types or tissues"/>
</dbReference>
<dbReference type="ExpressionAtlas" id="P45448">
    <property type="expression patterns" value="baseline and differential"/>
</dbReference>
<dbReference type="GO" id="GO:0005694">
    <property type="term" value="C:chromosome"/>
    <property type="evidence" value="ECO:0007669"/>
    <property type="project" value="UniProtKB-SubCell"/>
</dbReference>
<dbReference type="GO" id="GO:0005829">
    <property type="term" value="C:cytosol"/>
    <property type="evidence" value="ECO:0000304"/>
    <property type="project" value="Reactome"/>
</dbReference>
<dbReference type="GO" id="GO:0005634">
    <property type="term" value="C:nucleus"/>
    <property type="evidence" value="ECO:0000314"/>
    <property type="project" value="UniProtKB"/>
</dbReference>
<dbReference type="GO" id="GO:0090575">
    <property type="term" value="C:RNA polymerase II transcription regulator complex"/>
    <property type="evidence" value="ECO:0000314"/>
    <property type="project" value="BHF-UCL"/>
</dbReference>
<dbReference type="GO" id="GO:0003682">
    <property type="term" value="F:chromatin binding"/>
    <property type="evidence" value="ECO:0000314"/>
    <property type="project" value="BHF-UCL"/>
</dbReference>
<dbReference type="GO" id="GO:0003677">
    <property type="term" value="F:DNA binding"/>
    <property type="evidence" value="ECO:0000314"/>
    <property type="project" value="MGI"/>
</dbReference>
<dbReference type="GO" id="GO:0001228">
    <property type="term" value="F:DNA-binding transcription activator activity, RNA polymerase II-specific"/>
    <property type="evidence" value="ECO:0000314"/>
    <property type="project" value="NTNU_SB"/>
</dbReference>
<dbReference type="GO" id="GO:0003700">
    <property type="term" value="F:DNA-binding transcription factor activity"/>
    <property type="evidence" value="ECO:0000250"/>
    <property type="project" value="UniProtKB"/>
</dbReference>
<dbReference type="GO" id="GO:0004879">
    <property type="term" value="F:nuclear receptor activity"/>
    <property type="evidence" value="ECO:0000314"/>
    <property type="project" value="UniProtKB"/>
</dbReference>
<dbReference type="GO" id="GO:0005543">
    <property type="term" value="F:phospholipid binding"/>
    <property type="evidence" value="ECO:0007669"/>
    <property type="project" value="Ensembl"/>
</dbReference>
<dbReference type="GO" id="GO:0000978">
    <property type="term" value="F:RNA polymerase II cis-regulatory region sequence-specific DNA binding"/>
    <property type="evidence" value="ECO:0000314"/>
    <property type="project" value="NTNU_SB"/>
</dbReference>
<dbReference type="GO" id="GO:0001221">
    <property type="term" value="F:transcription coregulator binding"/>
    <property type="evidence" value="ECO:0007669"/>
    <property type="project" value="Ensembl"/>
</dbReference>
<dbReference type="GO" id="GO:0008270">
    <property type="term" value="F:zinc ion binding"/>
    <property type="evidence" value="ECO:0007669"/>
    <property type="project" value="UniProtKB-KW"/>
</dbReference>
<dbReference type="GO" id="GO:0090425">
    <property type="term" value="P:acinar cell differentiation"/>
    <property type="evidence" value="ECO:0000315"/>
    <property type="project" value="MGI"/>
</dbReference>
<dbReference type="GO" id="GO:0008206">
    <property type="term" value="P:bile acid metabolic process"/>
    <property type="evidence" value="ECO:0000314"/>
    <property type="project" value="UniProtKB"/>
</dbReference>
<dbReference type="GO" id="GO:0097720">
    <property type="term" value="P:calcineurin-mediated signaling"/>
    <property type="evidence" value="ECO:0007669"/>
    <property type="project" value="Ensembl"/>
</dbReference>
<dbReference type="GO" id="GO:0051216">
    <property type="term" value="P:cartilage development"/>
    <property type="evidence" value="ECO:0000315"/>
    <property type="project" value="UniProtKB"/>
</dbReference>
<dbReference type="GO" id="GO:1990830">
    <property type="term" value="P:cellular response to leukemia inhibitory factor"/>
    <property type="evidence" value="ECO:0000270"/>
    <property type="project" value="MGI"/>
</dbReference>
<dbReference type="GO" id="GO:0042632">
    <property type="term" value="P:cholesterol homeostasis"/>
    <property type="evidence" value="ECO:0000315"/>
    <property type="project" value="MGI"/>
</dbReference>
<dbReference type="GO" id="GO:0006338">
    <property type="term" value="P:chromatin remodeling"/>
    <property type="evidence" value="ECO:0000314"/>
    <property type="project" value="UniProtKB"/>
</dbReference>
<dbReference type="GO" id="GO:0040016">
    <property type="term" value="P:embryonic cleavage"/>
    <property type="evidence" value="ECO:0000315"/>
    <property type="project" value="UniProtKB"/>
</dbReference>
<dbReference type="GO" id="GO:0031017">
    <property type="term" value="P:exocrine pancreas development"/>
    <property type="evidence" value="ECO:0000315"/>
    <property type="project" value="UniProtKB"/>
</dbReference>
<dbReference type="GO" id="GO:0001826">
    <property type="term" value="P:inner cell mass cell differentiation"/>
    <property type="evidence" value="ECO:0000315"/>
    <property type="project" value="UniProtKB"/>
</dbReference>
<dbReference type="GO" id="GO:0140001">
    <property type="term" value="P:morula formation"/>
    <property type="evidence" value="ECO:0000314"/>
    <property type="project" value="UniProtKB"/>
</dbReference>
<dbReference type="GO" id="GO:0032331">
    <property type="term" value="P:negative regulation of chondrocyte differentiation"/>
    <property type="evidence" value="ECO:0000315"/>
    <property type="project" value="UniProtKB"/>
</dbReference>
<dbReference type="GO" id="GO:0050728">
    <property type="term" value="P:negative regulation of inflammatory response"/>
    <property type="evidence" value="ECO:0000315"/>
    <property type="project" value="UniProtKB"/>
</dbReference>
<dbReference type="GO" id="GO:0022008">
    <property type="term" value="P:neurogenesis"/>
    <property type="evidence" value="ECO:0000315"/>
    <property type="project" value="UniProtKB"/>
</dbReference>
<dbReference type="GO" id="GO:0061113">
    <property type="term" value="P:pancreas morphogenesis"/>
    <property type="evidence" value="ECO:0000315"/>
    <property type="project" value="MGI"/>
</dbReference>
<dbReference type="GO" id="GO:0045893">
    <property type="term" value="P:positive regulation of DNA-templated transcription"/>
    <property type="evidence" value="ECO:0000314"/>
    <property type="project" value="UniProtKB"/>
</dbReference>
<dbReference type="GO" id="GO:0031948">
    <property type="term" value="P:positive regulation of glucocorticoid biosynthetic process"/>
    <property type="evidence" value="ECO:0000315"/>
    <property type="project" value="UniProtKB"/>
</dbReference>
<dbReference type="GO" id="GO:2000738">
    <property type="term" value="P:positive regulation of stem cell differentiation"/>
    <property type="evidence" value="ECO:0000315"/>
    <property type="project" value="UniProtKB"/>
</dbReference>
<dbReference type="GO" id="GO:0050870">
    <property type="term" value="P:positive regulation of T cell activation"/>
    <property type="evidence" value="ECO:0000315"/>
    <property type="project" value="UniProtKB"/>
</dbReference>
<dbReference type="GO" id="GO:0002669">
    <property type="term" value="P:positive regulation of T cell anergy"/>
    <property type="evidence" value="ECO:0000315"/>
    <property type="project" value="UniProtKB"/>
</dbReference>
<dbReference type="GO" id="GO:0042102">
    <property type="term" value="P:positive regulation of T cell proliferation"/>
    <property type="evidence" value="ECO:0000315"/>
    <property type="project" value="UniProtKB"/>
</dbReference>
<dbReference type="GO" id="GO:2001051">
    <property type="term" value="P:positive regulation of tendon cell differentiation"/>
    <property type="evidence" value="ECO:0000315"/>
    <property type="project" value="UniProtKB"/>
</dbReference>
<dbReference type="GO" id="GO:0045944">
    <property type="term" value="P:positive regulation of transcription by RNA polymerase II"/>
    <property type="evidence" value="ECO:0000314"/>
    <property type="project" value="NTNU_SB"/>
</dbReference>
<dbReference type="GO" id="GO:0045070">
    <property type="term" value="P:positive regulation of viral genome replication"/>
    <property type="evidence" value="ECO:0007669"/>
    <property type="project" value="Ensembl"/>
</dbReference>
<dbReference type="GO" id="GO:0001545">
    <property type="term" value="P:primary ovarian follicle growth"/>
    <property type="evidence" value="ECO:0000315"/>
    <property type="project" value="UniProtKB"/>
</dbReference>
<dbReference type="GO" id="GO:0042127">
    <property type="term" value="P:regulation of cell population proliferation"/>
    <property type="evidence" value="ECO:0000316"/>
    <property type="project" value="MGI"/>
</dbReference>
<dbReference type="GO" id="GO:0006355">
    <property type="term" value="P:regulation of DNA-templated transcription"/>
    <property type="evidence" value="ECO:0000250"/>
    <property type="project" value="UniProtKB"/>
</dbReference>
<dbReference type="GO" id="GO:0060009">
    <property type="term" value="P:Sertoli cell development"/>
    <property type="evidence" value="ECO:0000315"/>
    <property type="project" value="UniProtKB"/>
</dbReference>
<dbReference type="GO" id="GO:0035019">
    <property type="term" value="P:somatic stem cell population maintenance"/>
    <property type="evidence" value="ECO:0000315"/>
    <property type="project" value="UniProtKB"/>
</dbReference>
<dbReference type="GO" id="GO:0007283">
    <property type="term" value="P:spermatogenesis"/>
    <property type="evidence" value="ECO:0000315"/>
    <property type="project" value="UniProtKB"/>
</dbReference>
<dbReference type="GO" id="GO:0141064">
    <property type="term" value="P:zygotic genome activation"/>
    <property type="evidence" value="ECO:0000315"/>
    <property type="project" value="UniProtKB"/>
</dbReference>
<dbReference type="CDD" id="cd07167">
    <property type="entry name" value="NR_DBD_Lrh-1_like"/>
    <property type="match status" value="1"/>
</dbReference>
<dbReference type="CDD" id="cd07069">
    <property type="entry name" value="NR_LBD_Lrh-1"/>
    <property type="match status" value="1"/>
</dbReference>
<dbReference type="FunFam" id="3.30.50.10:FF:000006">
    <property type="entry name" value="Nuclear receptor subfamily 5 group A member"/>
    <property type="match status" value="1"/>
</dbReference>
<dbReference type="FunFam" id="1.10.565.10:FF:000011">
    <property type="entry name" value="Nuclear receptor subfamily 5, group A, member 2"/>
    <property type="match status" value="1"/>
</dbReference>
<dbReference type="Gene3D" id="3.30.50.10">
    <property type="entry name" value="Erythroid Transcription Factor GATA-1, subunit A"/>
    <property type="match status" value="1"/>
</dbReference>
<dbReference type="Gene3D" id="1.10.565.10">
    <property type="entry name" value="Retinoid X Receptor"/>
    <property type="match status" value="1"/>
</dbReference>
<dbReference type="IDEAL" id="IID50211"/>
<dbReference type="InterPro" id="IPR035500">
    <property type="entry name" value="NHR-like_dom_sf"/>
</dbReference>
<dbReference type="InterPro" id="IPR016355">
    <property type="entry name" value="NR5-like"/>
</dbReference>
<dbReference type="InterPro" id="IPR000536">
    <property type="entry name" value="Nucl_hrmn_rcpt_lig-bd"/>
</dbReference>
<dbReference type="InterPro" id="IPR001723">
    <property type="entry name" value="Nuclear_hrmn_rcpt"/>
</dbReference>
<dbReference type="InterPro" id="IPR001628">
    <property type="entry name" value="Znf_hrmn_rcpt"/>
</dbReference>
<dbReference type="InterPro" id="IPR013088">
    <property type="entry name" value="Znf_NHR/GATA"/>
</dbReference>
<dbReference type="PANTHER" id="PTHR24086">
    <property type="entry name" value="NUCLEAR RECEPTOR SUBFAMILY 5 GROUP A"/>
    <property type="match status" value="1"/>
</dbReference>
<dbReference type="PANTHER" id="PTHR24086:SF18">
    <property type="entry name" value="NUCLEAR RECEPTOR SUBFAMILY 5 GROUP A MEMBER 2"/>
    <property type="match status" value="1"/>
</dbReference>
<dbReference type="Pfam" id="PF00104">
    <property type="entry name" value="Hormone_recep"/>
    <property type="match status" value="1"/>
</dbReference>
<dbReference type="Pfam" id="PF00105">
    <property type="entry name" value="zf-C4"/>
    <property type="match status" value="1"/>
</dbReference>
<dbReference type="PIRSF" id="PIRSF002530">
    <property type="entry name" value="Nuc_orph_FTZ-F1"/>
    <property type="match status" value="1"/>
</dbReference>
<dbReference type="PRINTS" id="PR00398">
    <property type="entry name" value="STRDHORMONER"/>
</dbReference>
<dbReference type="PRINTS" id="PR00047">
    <property type="entry name" value="STROIDFINGER"/>
</dbReference>
<dbReference type="SMART" id="SM00430">
    <property type="entry name" value="HOLI"/>
    <property type="match status" value="1"/>
</dbReference>
<dbReference type="SMART" id="SM00399">
    <property type="entry name" value="ZnF_C4"/>
    <property type="match status" value="1"/>
</dbReference>
<dbReference type="SUPFAM" id="SSF57716">
    <property type="entry name" value="Glucocorticoid receptor-like (DNA-binding domain)"/>
    <property type="match status" value="1"/>
</dbReference>
<dbReference type="SUPFAM" id="SSF48508">
    <property type="entry name" value="Nuclear receptor ligand-binding domain"/>
    <property type="match status" value="1"/>
</dbReference>
<dbReference type="PROSITE" id="PS51843">
    <property type="entry name" value="NR_LBD"/>
    <property type="match status" value="1"/>
</dbReference>
<dbReference type="PROSITE" id="PS00031">
    <property type="entry name" value="NUCLEAR_REC_DBD_1"/>
    <property type="match status" value="1"/>
</dbReference>
<dbReference type="PROSITE" id="PS51030">
    <property type="entry name" value="NUCLEAR_REC_DBD_2"/>
    <property type="match status" value="1"/>
</dbReference>
<keyword id="KW-0002">3D-structure</keyword>
<keyword id="KW-0010">Activator</keyword>
<keyword id="KW-0158">Chromosome</keyword>
<keyword id="KW-0217">Developmental protein</keyword>
<keyword id="KW-0238">DNA-binding</keyword>
<keyword id="KW-1017">Isopeptide bond</keyword>
<keyword id="KW-0446">Lipid-binding</keyword>
<keyword id="KW-0479">Metal-binding</keyword>
<keyword id="KW-0539">Nucleus</keyword>
<keyword id="KW-0675">Receptor</keyword>
<keyword id="KW-1185">Reference proteome</keyword>
<keyword id="KW-0804">Transcription</keyword>
<keyword id="KW-0805">Transcription regulation</keyword>
<keyword id="KW-0832">Ubl conjugation</keyword>
<keyword id="KW-0862">Zinc</keyword>
<keyword id="KW-0863">Zinc-finger</keyword>
<name>NR5A2_MOUSE</name>
<comment type="function">
    <text evidence="1 6 7 8 9 10 11 13 14 15 16 17 18 19 20 21 22 23 24 25 26 27 28 29 30 31 32 33">Orphan nuclear receptor that binds DNA as a monomer to the 5'-TCAAGGCCA-3' sequence and controls expression of target genes: regulates key biological processes, such as early embryonic development, cholesterol and bile acid synthesis pathways, as well as liver and pancreas morphogenesis (PubMed:14766742, PubMed:15831456, PubMed:15976031, PubMed:29443959, PubMed:38409506, PubMed:38977846, PubMed:39361745). Ligand-binding causes conformational change which causes recruitment of coactivators, promoting target gene activation (PubMed:15976031). The specific ligand is unknown, but specific phospholipids, such as phosphatidylethanolamine, phosphatidylserine, dilauroyl phosphatidylcholine and diundecanoyl phosphatidylcholine can act as ligand in vitro (PubMed:15976031). Acts as a pioneer transcription factor, which unwraps target DNA from histones and elicits local opening of closed chromatin (PubMed:38409506). Plays a central role during preimplantation stages of embryonic development (PubMed:15014077, PubMed:15831456, PubMed:34397088, PubMed:36423263, PubMed:37935903, PubMed:38243114, PubMed:38386558, PubMed:39361745). Plays a minor role in zygotic genome activation (ZGA) by regulating a small set of two-cell stage genes (PubMed:36423263, PubMed:39361745). Plays a major role in morula development (2-16 cells embryos) by acting as a master regulator at the 8-cell stage, controlling expression of lineage-specifying transcription factors and genes involved in mitosis, telomere maintenance and DNA repair (PubMed:37935903, PubMed:38386558, PubMed:39361745). Zygotic NR5A2 binds to both closed and open chromatin with other transcription factors, often at SINE B1/Alu repeats DNA elements, promoting chromatin accessibility at nearby regulatory regions (PubMed:39361745). Also involved in the epiblast stage of development and embryonic stem cell pluripotency, by promoting expression of POU5F1/OCT4 (PubMed:15831456, PubMed:20096661, PubMed:27984042, PubMed:34397088, PubMed:38386558). Regulates other processes later in development, such as formation of connective tissue in lower jaw and middle ear, neural stem cell differentiation, ovarian follicle development and Sertoli cell differentiation (PubMed:27447294, PubMed:33441767, PubMed:35192609, PubMed:36905926). Involved in exocrine pancreas development and acinar cell differentiation (PubMed:21852532, PubMed:25063451, PubMed:29443959). Acts as an essential transcriptional regulator of lipid metabolism (By similarity). Key regulator of cholesterol 7-alpha-hydroxylase gene (CYP7A) expression in liver (By similarity). Activates the transcription of CYP2C38 (PubMed:30555544). Also acts as a negative regulator of inflammation in different organs, such as intestine, liver and pancreas (PubMed:17670946, PubMed:29443959, PubMed:30305617). Protects against intestinal inflammation via its ability to regulate glucocorticoid production (PubMed:16923850, PubMed:17670946). Plays an anti-inflammatory role during the hepatic acute phase response by acting as a corepressor: inhibits the hepatic acute phase response by preventing dissociation of the N-Cor corepressor complex (By similarity). Acts as a regulator of immunity by promoting lymphocyte T-cell development, proliferation and effector functions (PubMed:31328159). Also involved in resolution of endoplasmic reticulum stress in the liver (PubMed:24737860).</text>
</comment>
<comment type="subunit">
    <text evidence="1 5 9 12">Monomer; Binds DNA as a monomer (By similarity). Interacts with nuclear receptor corepressors NR0B1 and NR0B2; repressing NR5A2 nuclear receptor activity (PubMed:12820970, PubMed:15976031, PubMed:19015525). Interacts with nuclear receptor coactivators CTNNB1, PPARGC1A and NCOA2; interaction takes place following ligand-binding and promotes target gene activation (By similarity). Interacts (when sumoylated) with GPS2; interaction with GPS2 onto hepatic acute phase protein promoters prevents N-Cor corepressor complex dissociation (By similarity). Interacts with HNF1A (By similarity). Interacts with GRIP1 (PubMed:12820970).</text>
</comment>
<comment type="subcellular location">
    <subcellularLocation>
        <location evidence="23 26">Nucleus</location>
    </subcellularLocation>
    <subcellularLocation>
        <location evidence="7">Chromosome</location>
    </subcellularLocation>
</comment>
<comment type="domain">
    <text evidence="31">The C-terminal extension (CTE) loop competes with a DNA minor groove anchor of the nucleosome and releases entry-exit site DNA, thereby promoting opening of closed chromatin.</text>
</comment>
<comment type="PTM">
    <text evidence="1">Sumoylated by SUMO1 at Lys-289 during the hepatic acute phase response, leading to promote interaction with GPS2 and prevent N-Cor corepressor complex dissociation.</text>
</comment>
<comment type="disruption phenotype">
    <text evidence="6 7 8 16 22 23 25 27 28 30 33">Embryonic lethality between 6.5-7.5 days post coitum (dpc) (PubMed:14766742, PubMed:15014077, PubMed:15831456). Embryos arrest at the early morula stage and display altered lineage specification, frequent mitotic failure and substantial chromosome segregation defects (PubMed:37935903, PubMed:38386558, PubMed:39361745). Conditional deletion of maternal transcripts has limited effects on zygotic genome activation (ZGA) (PubMed:39361745). Conditional deletion in the pancreas leads to defects in all three epithelial tissues of the pancreas at birth: a partial loss of endocrine cells, a disrupted ductal tree and nearly complete absence of acinar cells (PubMed:25063451). Conditional deletion in granulosa cells in female mice affects activation of primordial follicles and granulosa cell proliferation and function, leading to defects in ovulation and infertility (PubMed:33441767). Conditional deletion in testis, leads to impaired proliferation of Sertoli cells, leading to defects in seminiferous tubule morphogenesis and spermatogenesis (PubMed:35192609). Conditional deletion in T-cells leads to reduced mature T-cells (PubMed:31328159). Conditional deletion in neural crest cells leads to skeletal and tendon defects in lower jaw and middle ear, as well as salivary gland loss (PubMed:36905926).</text>
</comment>
<comment type="similarity">
    <text evidence="39">Belongs to the nuclear hormone receptor family. NR5 subfamily.</text>
</comment>
<reference key="1">
    <citation type="submission" date="1992-02" db="EMBL/GenBank/DDBJ databases">
        <title>LRH-1: a nuclear hormone receptor active in the absence of exogenous ligands.</title>
        <authorList>
            <person name="Tugwood J.D."/>
            <person name="Issemann I."/>
            <person name="Green S."/>
        </authorList>
    </citation>
    <scope>NUCLEOTIDE SEQUENCE [MRNA]</scope>
</reference>
<reference key="2">
    <citation type="journal article" date="2004" name="Genome Res.">
        <title>The status, quality, and expansion of the NIH full-length cDNA project: the Mammalian Gene Collection (MGC).</title>
        <authorList>
            <consortium name="The MGC Project Team"/>
        </authorList>
    </citation>
    <scope>NUCLEOTIDE SEQUENCE [LARGE SCALE MRNA]</scope>
    <source>
        <tissue>Brain</tissue>
    </source>
</reference>
<reference key="3">
    <citation type="journal article" date="2004" name="J. Biol. Chem.">
        <title>The role of alpha1-fetoprotein transcription factor/LRH-1 in bile acid biosynthesis: a known nuclear receptor activator that can act as a suppressor of bile acid biosynthesis.</title>
        <authorList>
            <person name="del Castillo-Olivares A."/>
            <person name="Campos J.A."/>
            <person name="Pandak W.M."/>
            <person name="Gil G."/>
        </authorList>
    </citation>
    <scope>FUNCTION</scope>
    <scope>DISRUPTION PHENOTYPE</scope>
</reference>
<reference key="4">
    <citation type="journal article" date="2004" name="J. Biol. Chem.">
        <title>The fetoprotein transcription factor (FTF) gene is essential to embryogenesis and cholesterol homeostasis and is regulated by a DR4 element.</title>
        <authorList>
            <person name="Pare J.F."/>
            <person name="Malenfant D."/>
            <person name="Courtemanche C."/>
            <person name="Jacob-Wagner M."/>
            <person name="Roy S."/>
            <person name="Allard D."/>
            <person name="Belanger L."/>
        </authorList>
    </citation>
    <scope>FUNCTION</scope>
    <scope>SUBCELLULAR LOCATION</scope>
    <scope>DISRUPTION PHENOTYPE</scope>
</reference>
<reference key="5">
    <citation type="journal article" date="2005" name="Mol. Cell. Biol.">
        <title>Orphan nuclear receptor LRH-1 is required to maintain Oct4 expression at the epiblast stage of embryonic development.</title>
        <authorList>
            <person name="Gu P."/>
            <person name="Goodwin B."/>
            <person name="Chung A.C."/>
            <person name="Xu X."/>
            <person name="Wheeler D.A."/>
            <person name="Price R.R."/>
            <person name="Galardi C."/>
            <person name="Peng L."/>
            <person name="Latour A.M."/>
            <person name="Koller B.H."/>
            <person name="Gossen J."/>
            <person name="Kliewer S.A."/>
            <person name="Cooney A.J."/>
        </authorList>
    </citation>
    <scope>FUNCTION</scope>
    <scope>DISRUPTION PHENOTYPE</scope>
</reference>
<reference key="6">
    <citation type="journal article" date="2006" name="J. Exp. Med.">
        <title>The nuclear receptor LRH-1 critically regulates extra-adrenal glucocorticoid synthesis in the intestine.</title>
        <authorList>
            <person name="Mueller M."/>
            <person name="Cima I."/>
            <person name="Noti M."/>
            <person name="Fuhrer A."/>
            <person name="Jakob S."/>
            <person name="Dubuquoy L."/>
            <person name="Schoonjans K."/>
            <person name="Brunner T."/>
        </authorList>
    </citation>
    <scope>FUNCTION</scope>
</reference>
<reference key="7">
    <citation type="journal article" date="2007" name="Proc. Natl. Acad. Sci. U.S.A.">
        <title>LRH-1-mediated glucocorticoid synthesis in enterocytes protects against inflammatory bowel disease.</title>
        <authorList>
            <person name="Coste A."/>
            <person name="Dubuquoy L."/>
            <person name="Barnouin R."/>
            <person name="Annicotte J.S."/>
            <person name="Magnier B."/>
            <person name="Notti M."/>
            <person name="Corazza N."/>
            <person name="Antal M.C."/>
            <person name="Metzger D."/>
            <person name="Desreumaux P."/>
            <person name="Brunner T."/>
            <person name="Auwerx J."/>
            <person name="Schoonjans K."/>
        </authorList>
    </citation>
    <scope>FUNCTION</scope>
</reference>
<reference key="8">
    <citation type="journal article" date="2010" name="Cell Stem Cell">
        <title>The nuclear receptor Nr5a2 can replace Oct4 in the reprogramming of murine somatic cells to pluripotent cells.</title>
        <authorList>
            <person name="Heng J.C."/>
            <person name="Feng B."/>
            <person name="Han J."/>
            <person name="Jiang J."/>
            <person name="Kraus P."/>
            <person name="Ng J.H."/>
            <person name="Orlov Y.L."/>
            <person name="Huss M."/>
            <person name="Yang L."/>
            <person name="Lufkin T."/>
            <person name="Lim B."/>
            <person name="Ng H.H."/>
        </authorList>
    </citation>
    <scope>FUNCTION</scope>
</reference>
<reference key="9">
    <citation type="journal article" date="2011" name="Genes Dev.">
        <title>LRH-1 and PTF1-L coregulate an exocrine pancreas-specific transcriptional network for digestive function.</title>
        <authorList>
            <person name="Holmstrom S.R."/>
            <person name="Deering T."/>
            <person name="Swift G.H."/>
            <person name="Poelwijk F.J."/>
            <person name="Mangelsdorf D.J."/>
            <person name="Kliewer S.A."/>
            <person name="MacDonald R.J."/>
        </authorList>
    </citation>
    <scope>FUNCTION</scope>
</reference>
<reference key="10">
    <citation type="journal article" date="2011" name="Nature">
        <title>A nuclear-receptor-dependent phosphatidylcholine pathway with antidiabetic effects.</title>
        <authorList>
            <person name="Lee J.M."/>
            <person name="Lee Y.K."/>
            <person name="Mamrosh J.L."/>
            <person name="Busby S.A."/>
            <person name="Griffin P.R."/>
            <person name="Pathak M.C."/>
            <person name="Ortlund E.A."/>
            <person name="Moore D.D."/>
        </authorList>
    </citation>
    <scope>FUNCTION</scope>
</reference>
<reference key="11">
    <citation type="journal article" date="2014" name="Development">
        <title>The nuclear hormone receptor family member NR5A2 controls aspects of multipotent progenitor cell formation and acinar differentiation during pancreatic organogenesis.</title>
        <authorList>
            <person name="Hale M.A."/>
            <person name="Swift G.H."/>
            <person name="Hoang C.Q."/>
            <person name="Deering T.G."/>
            <person name="Masui T."/>
            <person name="Lee Y.K."/>
            <person name="Xue J."/>
            <person name="MacDonald R.J."/>
        </authorList>
    </citation>
    <scope>FUNCTION</scope>
    <scope>DISRUPTION PHENOTYPE</scope>
</reference>
<reference key="12">
    <citation type="journal article" date="2014" name="Elife">
        <title>Nuclear receptor LRH-1/NR5A2 is required and targetable for liver endoplasmic reticulum stress resolution.</title>
        <authorList>
            <person name="Mamrosh J.L."/>
            <person name="Lee J.M."/>
            <person name="Wagner M."/>
            <person name="Stambrook P.J."/>
            <person name="Whitby R.J."/>
            <person name="Sifers R.N."/>
            <person name="Wu S.P."/>
            <person name="Tsai M.J."/>
            <person name="Demayo F.J."/>
            <person name="Moore D.D."/>
        </authorList>
    </citation>
    <scope>FUNCTION</scope>
</reference>
<reference key="13">
    <citation type="journal article" date="2016" name="J. Mol. Biol.">
        <title>A Structural investigation into Oct4 regulation by orphan nuclear receptors, germ cell nuclear factor (GCNF), and liver receptor homolog-1 (LRH-1).</title>
        <authorList>
            <person name="Weikum E.R."/>
            <person name="Tuntland M.L."/>
            <person name="Murphy M.N."/>
            <person name="Ortlund E.A."/>
        </authorList>
    </citation>
    <scope>FUNCTION</scope>
</reference>
<reference key="14">
    <citation type="journal article" date="2016" name="Nat. Commun.">
        <title>Nuclear receptor NR5A2 controls neural stem cell fate decisions during development.</title>
        <authorList>
            <person name="Stergiopoulos A."/>
            <person name="Politis P.K."/>
        </authorList>
    </citation>
    <scope>FUNCTION</scope>
</reference>
<reference key="15">
    <citation type="journal article" date="2018" name="Nature">
        <title>Transcriptional regulation by NR5A2 links differentiation and inflammation in the pancreas.</title>
        <authorList>
            <person name="Cobo I."/>
            <person name="Martinelli P."/>
            <person name="Flandez M."/>
            <person name="Bakiri L."/>
            <person name="Zhang M."/>
            <person name="Carrillo-de-Santa-Pau E."/>
            <person name="Jia J."/>
            <person name="Sanchez-Arevalo Lobo V.J."/>
            <person name="Megias D."/>
            <person name="Felipe I."/>
            <person name="Del Pozo N."/>
            <person name="Millan I."/>
            <person name="Thommesen L."/>
            <person name="Bruland T."/>
            <person name="Olson S.H."/>
            <person name="Smith J."/>
            <person name="Schoonjans K."/>
            <person name="Bamlet W.R."/>
            <person name="Petersen G.M."/>
            <person name="Malats N."/>
            <person name="Amundadottir L.T."/>
            <person name="Wagner E.F."/>
            <person name="Real F.X."/>
        </authorList>
    </citation>
    <scope>FUNCTION</scope>
</reference>
<reference key="16">
    <citation type="journal article" date="2018" name="Nat. Commun.">
        <title>LRH-1 mitigates intestinal inflammatory disease by maintaining epithelial homeostasis and cell survival.</title>
        <authorList>
            <person name="Bayrer J.R."/>
            <person name="Wang H."/>
            <person name="Nattiv R."/>
            <person name="Suzawa M."/>
            <person name="Escusa H.S."/>
            <person name="Fletterick R.J."/>
            <person name="Klein O.D."/>
            <person name="Moore D.D."/>
            <person name="Ingraham H.A."/>
        </authorList>
    </citation>
    <scope>FUNCTION</scope>
</reference>
<reference key="17">
    <citation type="journal article" date="2018" name="Theranostics">
        <title>Small heterodimer partner regulates circadian cytochromes p450 and drug-induced hepatotoxicity.</title>
        <authorList>
            <person name="Zhang T."/>
            <person name="Yu F."/>
            <person name="Guo L."/>
            <person name="Chen M."/>
            <person name="Yuan X."/>
            <person name="Wu B."/>
        </authorList>
    </citation>
    <scope>FUNCTION</scope>
</reference>
<reference key="18">
    <citation type="journal article" date="2019" name="Sci. Adv.">
        <title>The orphan nuclear receptor LRH-1/NR5a2 critically regulates T cell functions.</title>
        <authorList>
            <person name="Seitz C."/>
            <person name="Huang J."/>
            <person name="Geiselhoeringer A.L."/>
            <person name="Galbani-Bianchi P."/>
            <person name="Michalek S."/>
            <person name="Phan T.S."/>
            <person name="Reinhold C."/>
            <person name="Dietrich L."/>
            <person name="Schmidt C."/>
            <person name="Corazza N."/>
            <person name="Delgado E."/>
            <person name="Schnalzger T."/>
            <person name="Schoonjans K."/>
            <person name="Brunner T."/>
        </authorList>
    </citation>
    <scope>FUNCTION</scope>
    <scope>DISRUPTION PHENOTYPE</scope>
</reference>
<reference key="19">
    <citation type="journal article" date="2021" name="Development">
        <title>The combined action of Esrrb and Nr5a2 is essential for murine naive pluripotency.</title>
        <authorList>
            <person name="Festuccia N."/>
            <person name="Owens N."/>
            <person name="Chervova A."/>
            <person name="Dubois A."/>
            <person name="Navarro P."/>
        </authorList>
    </citation>
    <scope>FUNCTION</scope>
</reference>
<reference key="20">
    <citation type="journal article" date="2021" name="Sci. Rep.">
        <title>A role for orphan nuclear receptor liver receptor homolog-1 (LRH-1, NR5A2) in primordial follicle activation.</title>
        <authorList>
            <person name="Meinsohn M.C."/>
            <person name="Hughes C.H.K."/>
            <person name="Estienne A."/>
            <person name="Saatcioglu H.D."/>
            <person name="Pepin D."/>
            <person name="Duggavathi R."/>
            <person name="Murphy B.D."/>
        </authorList>
    </citation>
    <scope>FUNCTION</scope>
    <scope>SUBCELLULAR LOCATION</scope>
    <scope>DISRUPTION PHENOTYPE</scope>
</reference>
<reference key="21">
    <citation type="journal article" date="2022" name="PLoS Genet.">
        <title>Lrh1 can help reprogram sexual cell fate and is required for Sertoli cell development and spermatogenesis in the mouse testis.</title>
        <authorList>
            <person name="Agrimson K.S."/>
            <person name="Minkina A."/>
            <person name="Sadowski D."/>
            <person name="Wheeler A."/>
            <person name="Murphy M.W."/>
            <person name="Gearhart M.D."/>
            <person name="Bardwell V.J."/>
            <person name="Zarkower D."/>
        </authorList>
    </citation>
    <scope>FUNCTION</scope>
    <scope>DISRUPTION PHENOTYPE</scope>
</reference>
<reference key="22">
    <citation type="journal article" date="2022" name="Science">
        <title>Zygotic genome activation by the totipotency pioneer factor Nr5a2.</title>
        <authorList>
            <person name="Gassler J."/>
            <person name="Kobayashi W."/>
            <person name="Gaspar I."/>
            <person name="Ruangroengkulrith S."/>
            <person name="Mohanan A."/>
            <person name="Gomez Hernandez L."/>
            <person name="Kravchenko P."/>
            <person name="Kuemmecke M."/>
            <person name="Lalic A."/>
            <person name="Rifel N."/>
            <person name="Ashburn R.J."/>
            <person name="Zaczek M."/>
            <person name="Vallot A."/>
            <person name="Cuenca Rico L."/>
            <person name="Ladstaetter S."/>
            <person name="Tachibana K."/>
        </authorList>
    </citation>
    <scope>FUNCTION</scope>
    <scope>SUBCELLULAR LOCATION</scope>
</reference>
<reference key="23">
    <citation type="journal article" date="2023" name="Cell Res.">
        <title>NR5A2 connects zygotic genome activation to the first lineage segregation in totipotent embryos.</title>
        <authorList>
            <person name="Lai F."/>
            <person name="Li L."/>
            <person name="Hu X."/>
            <person name="Liu B."/>
            <person name="Zhu Z."/>
            <person name="Liu L."/>
            <person name="Fan Q."/>
            <person name="Tian H."/>
            <person name="Xu K."/>
            <person name="Lu X."/>
            <person name="Li Q."/>
            <person name="Feng K."/>
            <person name="Wang L."/>
            <person name="Lin Z."/>
            <person name="Deng H."/>
            <person name="Li J."/>
            <person name="Xie W."/>
        </authorList>
    </citation>
    <scope>FUNCTION</scope>
    <scope>DISRUPTION PHENOTYPE</scope>
</reference>
<reference key="24">
    <citation type="journal article" date="2023" name="Dev. Cell">
        <title>Nuclear receptor Nr5a2 promotes diverse connective tissue fates in the jaw.</title>
        <authorList>
            <person name="Chen H.J."/>
            <person name="Barske L."/>
            <person name="Talbot J.C."/>
            <person name="Dinwoodie O.M."/>
            <person name="Roberts R.R."/>
            <person name="Farmer D.T."/>
            <person name="Jimenez C."/>
            <person name="Merrill A.E."/>
            <person name="Tucker A.S."/>
            <person name="Crump J.G."/>
        </authorList>
    </citation>
    <scope>FUNCTION</scope>
    <scope>DISRUPTION PHENOTYPE</scope>
</reference>
<reference key="25">
    <citation type="journal article" date="2024" name="Cell Rep.">
        <title>Nr5a2 ensures inner cell mass formation in mouse blastocyst.</title>
        <authorList>
            <person name="Zhao Y."/>
            <person name="Zhang M."/>
            <person name="Liu J."/>
            <person name="Hu X."/>
            <person name="Sun Y."/>
            <person name="Huang X."/>
            <person name="Li J."/>
            <person name="Lei L."/>
        </authorList>
    </citation>
    <scope>FUNCTION</scope>
    <scope>DISRUPTION PHENOTYPE</scope>
    <scope>MUTAGENESIS OF LYS-173 AND LYS-289</scope>
</reference>
<reference key="26">
    <citation type="journal article" date="2024" name="Nat. Cell Biol.">
        <title>A single-cell atlas of chromatin accessibility in mouse organogenesis.</title>
        <authorList>
            <person name="Sun K."/>
            <person name="Liu X."/>
            <person name="Lan X."/>
        </authorList>
    </citation>
    <scope>FUNCTION</scope>
</reference>
<reference key="27">
    <citation type="journal article" date="2024" name="Nat. Struct. Mol. Biol.">
        <title>Nucleosome-bound NR5A2 structure reveals pioneer factor mechanism by DNA minor groove anchor competition.</title>
        <authorList>
            <person name="Kobayashi W."/>
            <person name="Sappler A.H."/>
            <person name="Bollschweiler D."/>
            <person name="Kuemmecke M."/>
            <person name="Basquin J."/>
            <person name="Arslantas E.N."/>
            <person name="Ruangroengkulrith S."/>
            <person name="Hornberger R."/>
            <person name="Duderstadt K."/>
            <person name="Tachibana K."/>
        </authorList>
    </citation>
    <scope>FUNCTION</scope>
    <scope>DOMAIN</scope>
    <scope>MUTAGENESIS OF ASP-180</scope>
</reference>
<reference key="28">
    <citation type="journal article" date="2024" name="Nat. Struct. Mol. Biol.">
        <title>Lineage regulators TFAP2C and NR5A2 function as bipotency activators in totipotent embryos.</title>
        <authorList>
            <person name="Li L."/>
            <person name="Lai F."/>
            <person name="Liu L."/>
            <person name="Lu X."/>
            <person name="Hu X."/>
            <person name="Liu B."/>
            <person name="Lin Z."/>
            <person name="Fan Q."/>
            <person name="Kong F."/>
            <person name="Xu Q."/>
            <person name="Xie W."/>
        </authorList>
    </citation>
    <scope>FUNCTION</scope>
</reference>
<reference key="29">
    <citation type="journal article" date="2024" name="Science">
        <title>Nr5a2 is dispensable for zygotic genome activation but essential for morula development.</title>
        <authorList>
            <person name="Festuccia N."/>
            <person name="Vandormael-Pournin S."/>
            <person name="Chervova A."/>
            <person name="Geiselmann A."/>
            <person name="Langa-Vives F."/>
            <person name="Coux R.X."/>
            <person name="Gonzalez I."/>
            <person name="Collet G.G."/>
            <person name="Cohen-Tannoudji M."/>
            <person name="Navarro P."/>
        </authorList>
    </citation>
    <scope>FUNCTION</scope>
    <scope>DISRUPTION PHENOTYPE</scope>
</reference>
<reference key="30">
    <citation type="journal article" date="2003" name="Mol. Cell">
        <title>Structural basis for ligand-independent activation of the orphan nuclear receptor LRH-1.</title>
        <authorList>
            <person name="Sablin E.P."/>
            <person name="Krylova I.N."/>
            <person name="Fletterick R.J."/>
            <person name="Ingraham H.A."/>
        </authorList>
    </citation>
    <scope>X-RAY CRYSTALLOGRAPHY (2.4 ANGSTROMS) OF 313-560</scope>
    <scope>INTERACTION WITH NR0B2 AND GRIP1</scope>
</reference>
<reference key="31">
    <citation type="journal article" date="2005" name="Proc. Natl. Acad. Sci. U.S.A.">
        <title>Structural and biochemical basis for selective repression of the orphan nuclear receptor liver receptor homolog 1 by small heterodimer partner.</title>
        <authorList>
            <person name="Li Y."/>
            <person name="Choi M."/>
            <person name="Suino K."/>
            <person name="Kovach A."/>
            <person name="Daugherty J."/>
            <person name="Kliewer S.A."/>
            <person name="Xu H.E."/>
        </authorList>
    </citation>
    <scope>X-RAY CRYSTALLOGRAPHY (2.5 ANGSTROMS) OF 318-560 IN COMPLEX WITH NR0B2</scope>
</reference>
<reference evidence="41" key="32">
    <citation type="journal article" date="2008" name="Proc. Natl. Acad. Sci. U.S.A.">
        <title>The structure of corepressor Dax-1 bound to its target nuclear receptor LRH-1.</title>
        <authorList>
            <person name="Sablin E.P."/>
            <person name="Woods A."/>
            <person name="Krylova I.N."/>
            <person name="Hwang P."/>
            <person name="Ingraham H.A."/>
            <person name="Fletterick R.J."/>
        </authorList>
    </citation>
    <scope>X-RAY CRYSTALLOGRAPHY (3.00 ANGSTROMS) OF 313-560 IN COMPLEX WITH NR0B1</scope>
    <scope>INTERACTION WITH NR0B1</scope>
</reference>
<gene>
    <name evidence="38 40" type="primary">Nr5a2</name>
    <name evidence="35 36" type="synonym">Ftf</name>
    <name evidence="34" type="synonym">Lrh1</name>
</gene>
<feature type="chain" id="PRO_0000053736" description="Nuclear receptor subfamily 5 group A member 2">
    <location>
        <begin position="1"/>
        <end position="560"/>
    </location>
</feature>
<feature type="domain" description="NR LBD" evidence="3">
    <location>
        <begin position="319"/>
        <end position="558"/>
    </location>
</feature>
<feature type="DNA-binding region" description="Nuclear receptor" evidence="2">
    <location>
        <begin position="104"/>
        <end position="175"/>
    </location>
</feature>
<feature type="zinc finger region" description="NR C4-type" evidence="2">
    <location>
        <begin position="107"/>
        <end position="127"/>
    </location>
</feature>
<feature type="zinc finger region" description="NR C4-type" evidence="2">
    <location>
        <begin position="143"/>
        <end position="167"/>
    </location>
</feature>
<feature type="region of interest" description="Disordered" evidence="4">
    <location>
        <begin position="21"/>
        <end position="55"/>
    </location>
</feature>
<feature type="region of interest" description="C-terminal extension (CTE)" evidence="31">
    <location>
        <begin position="173"/>
        <end position="188"/>
    </location>
</feature>
<feature type="region of interest" description="AF-2" evidence="3">
    <location>
        <begin position="547"/>
        <end position="558"/>
    </location>
</feature>
<feature type="short sequence motif" description="FTZ-F1 box" evidence="1">
    <location>
        <begin position="189"/>
        <end position="208"/>
    </location>
</feature>
<feature type="compositionally biased region" description="Basic and acidic residues" evidence="4">
    <location>
        <begin position="28"/>
        <end position="48"/>
    </location>
</feature>
<feature type="binding site" evidence="1">
    <location>
        <position position="107"/>
    </location>
    <ligand>
        <name>Zn(2+)</name>
        <dbReference type="ChEBI" id="CHEBI:29105"/>
        <label>1</label>
    </ligand>
</feature>
<feature type="binding site" evidence="1">
    <location>
        <position position="110"/>
    </location>
    <ligand>
        <name>Zn(2+)</name>
        <dbReference type="ChEBI" id="CHEBI:29105"/>
        <label>1</label>
    </ligand>
</feature>
<feature type="binding site" evidence="1">
    <location>
        <position position="124"/>
    </location>
    <ligand>
        <name>Zn(2+)</name>
        <dbReference type="ChEBI" id="CHEBI:29105"/>
        <label>1</label>
    </ligand>
</feature>
<feature type="binding site" evidence="1">
    <location>
        <position position="127"/>
    </location>
    <ligand>
        <name>Zn(2+)</name>
        <dbReference type="ChEBI" id="CHEBI:29105"/>
        <label>1</label>
    </ligand>
</feature>
<feature type="binding site" evidence="1">
    <location>
        <position position="143"/>
    </location>
    <ligand>
        <name>Zn(2+)</name>
        <dbReference type="ChEBI" id="CHEBI:29105"/>
        <label>2</label>
    </ligand>
</feature>
<feature type="binding site" evidence="1">
    <location>
        <position position="149"/>
    </location>
    <ligand>
        <name>Zn(2+)</name>
        <dbReference type="ChEBI" id="CHEBI:29105"/>
        <label>2</label>
    </ligand>
</feature>
<feature type="binding site" evidence="1">
    <location>
        <position position="159"/>
    </location>
    <ligand>
        <name>Zn(2+)</name>
        <dbReference type="ChEBI" id="CHEBI:29105"/>
        <label>2</label>
    </ligand>
</feature>
<feature type="binding site" evidence="1">
    <location>
        <position position="162"/>
    </location>
    <ligand>
        <name>Zn(2+)</name>
        <dbReference type="ChEBI" id="CHEBI:29105"/>
        <label>2</label>
    </ligand>
</feature>
<feature type="binding site" evidence="1">
    <location>
        <position position="535"/>
    </location>
    <ligand>
        <name>a phospholipid derivative</name>
        <dbReference type="ChEBI" id="CHEBI:16247"/>
    </ligand>
</feature>
<feature type="binding site" evidence="1">
    <location>
        <position position="539"/>
    </location>
    <ligand>
        <name>a phospholipid derivative</name>
        <dbReference type="ChEBI" id="CHEBI:16247"/>
    </ligand>
</feature>
<feature type="cross-link" description="Glycyl lysine isopeptide (Lys-Gly) (interchain with G-Cter in SUMO1)" evidence="1">
    <location>
        <position position="289"/>
    </location>
</feature>
<feature type="mutagenesis site" description="Does not affect early embryonic development; when associated with R-289." evidence="30">
    <original>K</original>
    <variation>R</variation>
    <location>
        <position position="173"/>
    </location>
</feature>
<feature type="mutagenesis site" description="Strongly reduced nucleosome-binding." evidence="31">
    <original>D</original>
    <variation>A</variation>
    <location>
        <position position="180"/>
    </location>
</feature>
<feature type="mutagenesis site" description="Does not affect early embryonic development; when associated with R-173." evidence="30">
    <original>K</original>
    <variation>R</variation>
    <location>
        <position position="289"/>
    </location>
</feature>
<feature type="helix" evidence="42">
    <location>
        <begin position="322"/>
        <end position="329"/>
    </location>
</feature>
<feature type="helix" evidence="42">
    <location>
        <begin position="334"/>
        <end position="351"/>
    </location>
</feature>
<feature type="strand" evidence="42">
    <location>
        <begin position="354"/>
        <end position="356"/>
    </location>
</feature>
<feature type="helix" evidence="42">
    <location>
        <begin position="361"/>
        <end position="381"/>
    </location>
</feature>
<feature type="helix" evidence="42">
    <location>
        <begin position="385"/>
        <end position="387"/>
    </location>
</feature>
<feature type="helix" evidence="42">
    <location>
        <begin position="390"/>
        <end position="416"/>
    </location>
</feature>
<feature type="strand" evidence="42">
    <location>
        <begin position="419"/>
        <end position="423"/>
    </location>
</feature>
<feature type="strand" evidence="42">
    <location>
        <begin position="429"/>
        <end position="431"/>
    </location>
</feature>
<feature type="helix" evidence="42">
    <location>
        <begin position="432"/>
        <end position="437"/>
    </location>
</feature>
<feature type="helix" evidence="42">
    <location>
        <begin position="441"/>
        <end position="459"/>
    </location>
</feature>
<feature type="helix" evidence="42">
    <location>
        <begin position="464"/>
        <end position="475"/>
    </location>
</feature>
<feature type="helix" evidence="42">
    <location>
        <begin position="486"/>
        <end position="507"/>
    </location>
</feature>
<feature type="helix" evidence="42">
    <location>
        <begin position="514"/>
        <end position="519"/>
    </location>
</feature>
<feature type="helix" evidence="42">
    <location>
        <begin position="522"/>
        <end position="541"/>
    </location>
</feature>
<feature type="helix" evidence="42">
    <location>
        <begin position="549"/>
        <end position="555"/>
    </location>
</feature>
<feature type="turn" evidence="42">
    <location>
        <begin position="556"/>
        <end position="558"/>
    </location>
</feature>
<proteinExistence type="evidence at protein level"/>
<evidence type="ECO:0000250" key="1">
    <source>
        <dbReference type="UniProtKB" id="O00482"/>
    </source>
</evidence>
<evidence type="ECO:0000255" key="2">
    <source>
        <dbReference type="PROSITE-ProRule" id="PRU00407"/>
    </source>
</evidence>
<evidence type="ECO:0000255" key="3">
    <source>
        <dbReference type="PROSITE-ProRule" id="PRU01189"/>
    </source>
</evidence>
<evidence type="ECO:0000256" key="4">
    <source>
        <dbReference type="SAM" id="MobiDB-lite"/>
    </source>
</evidence>
<evidence type="ECO:0000269" key="5">
    <source>
    </source>
</evidence>
<evidence type="ECO:0000269" key="6">
    <source>
    </source>
</evidence>
<evidence type="ECO:0000269" key="7">
    <source>
    </source>
</evidence>
<evidence type="ECO:0000269" key="8">
    <source>
    </source>
</evidence>
<evidence type="ECO:0000269" key="9">
    <source>
    </source>
</evidence>
<evidence type="ECO:0000269" key="10">
    <source>
    </source>
</evidence>
<evidence type="ECO:0000269" key="11">
    <source>
    </source>
</evidence>
<evidence type="ECO:0000269" key="12">
    <source>
    </source>
</evidence>
<evidence type="ECO:0000269" key="13">
    <source>
    </source>
</evidence>
<evidence type="ECO:0000269" key="14">
    <source>
    </source>
</evidence>
<evidence type="ECO:0000269" key="15">
    <source>
    </source>
</evidence>
<evidence type="ECO:0000269" key="16">
    <source>
    </source>
</evidence>
<evidence type="ECO:0000269" key="17">
    <source>
    </source>
</evidence>
<evidence type="ECO:0000269" key="18">
    <source>
    </source>
</evidence>
<evidence type="ECO:0000269" key="19">
    <source>
    </source>
</evidence>
<evidence type="ECO:0000269" key="20">
    <source>
    </source>
</evidence>
<evidence type="ECO:0000269" key="21">
    <source>
    </source>
</evidence>
<evidence type="ECO:0000269" key="22">
    <source>
    </source>
</evidence>
<evidence type="ECO:0000269" key="23">
    <source>
    </source>
</evidence>
<evidence type="ECO:0000269" key="24">
    <source>
    </source>
</evidence>
<evidence type="ECO:0000269" key="25">
    <source>
    </source>
</evidence>
<evidence type="ECO:0000269" key="26">
    <source>
    </source>
</evidence>
<evidence type="ECO:0000269" key="27">
    <source>
    </source>
</evidence>
<evidence type="ECO:0000269" key="28">
    <source>
    </source>
</evidence>
<evidence type="ECO:0000269" key="29">
    <source>
    </source>
</evidence>
<evidence type="ECO:0000269" key="30">
    <source>
    </source>
</evidence>
<evidence type="ECO:0000269" key="31">
    <source>
    </source>
</evidence>
<evidence type="ECO:0000269" key="32">
    <source>
    </source>
</evidence>
<evidence type="ECO:0000269" key="33">
    <source>
    </source>
</evidence>
<evidence type="ECO:0000303" key="34">
    <source>
    </source>
</evidence>
<evidence type="ECO:0000303" key="35">
    <source>
    </source>
</evidence>
<evidence type="ECO:0000303" key="36">
    <source>
    </source>
</evidence>
<evidence type="ECO:0000303" key="37">
    <source>
    </source>
</evidence>
<evidence type="ECO:0000303" key="38">
    <source>
    </source>
</evidence>
<evidence type="ECO:0000305" key="39"/>
<evidence type="ECO:0000312" key="40">
    <source>
        <dbReference type="MGI" id="MGI:1346834"/>
    </source>
</evidence>
<evidence type="ECO:0007744" key="41">
    <source>
        <dbReference type="PDB" id="3F5C"/>
    </source>
</evidence>
<evidence type="ECO:0007829" key="42">
    <source>
        <dbReference type="PDB" id="1PK5"/>
    </source>
</evidence>
<accession>P45448</accession>
<accession>B9EHF9</accession>